<reference key="1">
    <citation type="submission" date="2008-04" db="EMBL/GenBank/DDBJ databases">
        <title>Complete sequence of Yersinia pseudotuberculosis PB1/+.</title>
        <authorList>
            <person name="Copeland A."/>
            <person name="Lucas S."/>
            <person name="Lapidus A."/>
            <person name="Glavina del Rio T."/>
            <person name="Dalin E."/>
            <person name="Tice H."/>
            <person name="Bruce D."/>
            <person name="Goodwin L."/>
            <person name="Pitluck S."/>
            <person name="Munk A.C."/>
            <person name="Brettin T."/>
            <person name="Detter J.C."/>
            <person name="Han C."/>
            <person name="Tapia R."/>
            <person name="Schmutz J."/>
            <person name="Larimer F."/>
            <person name="Land M."/>
            <person name="Hauser L."/>
            <person name="Challacombe J.F."/>
            <person name="Green L."/>
            <person name="Lindler L.E."/>
            <person name="Nikolich M.P."/>
            <person name="Richardson P."/>
        </authorList>
    </citation>
    <scope>NUCLEOTIDE SEQUENCE [LARGE SCALE GENOMIC DNA]</scope>
    <source>
        <strain>PB1/+</strain>
    </source>
</reference>
<keyword id="KW-0456">Lyase</keyword>
<comment type="function">
    <text evidence="1">Catalyzes the formation of methylglyoxal from dihydroxyacetone phosphate.</text>
</comment>
<comment type="catalytic activity">
    <reaction evidence="1">
        <text>dihydroxyacetone phosphate = methylglyoxal + phosphate</text>
        <dbReference type="Rhea" id="RHEA:17937"/>
        <dbReference type="ChEBI" id="CHEBI:17158"/>
        <dbReference type="ChEBI" id="CHEBI:43474"/>
        <dbReference type="ChEBI" id="CHEBI:57642"/>
        <dbReference type="EC" id="4.2.3.3"/>
    </reaction>
</comment>
<comment type="similarity">
    <text evidence="1">Belongs to the methylglyoxal synthase family.</text>
</comment>
<organism>
    <name type="scientific">Yersinia pseudotuberculosis serotype IB (strain PB1/+)</name>
    <dbReference type="NCBI Taxonomy" id="502801"/>
    <lineage>
        <taxon>Bacteria</taxon>
        <taxon>Pseudomonadati</taxon>
        <taxon>Pseudomonadota</taxon>
        <taxon>Gammaproteobacteria</taxon>
        <taxon>Enterobacterales</taxon>
        <taxon>Yersiniaceae</taxon>
        <taxon>Yersinia</taxon>
    </lineage>
</organism>
<proteinExistence type="inferred from homology"/>
<gene>
    <name evidence="1" type="primary">mgsA</name>
    <name type="ordered locus">YPTS_1565</name>
</gene>
<sequence>MELTTRTIAARKHIALVSHDHCKKSLLAWVMENRDLLAQHELYATGTTGNLVQKATGIDVHCLLSGPMGGDQEVGALISEKKIDILIFFWDPLNAVPHDPDVKALLRLATVWNIPVATNRSTADFLIGSTLFSSEVTIAIPDYDRYMQQRLDLK</sequence>
<evidence type="ECO:0000255" key="1">
    <source>
        <dbReference type="HAMAP-Rule" id="MF_00549"/>
    </source>
</evidence>
<protein>
    <recommendedName>
        <fullName evidence="1">Methylglyoxal synthase</fullName>
        <shortName evidence="1">MGS</shortName>
        <ecNumber evidence="1">4.2.3.3</ecNumber>
    </recommendedName>
</protein>
<feature type="chain" id="PRO_1000129014" description="Methylglyoxal synthase">
    <location>
        <begin position="1"/>
        <end position="154"/>
    </location>
</feature>
<feature type="domain" description="MGS-like" evidence="1">
    <location>
        <begin position="1"/>
        <end position="154"/>
    </location>
</feature>
<feature type="active site" description="Proton donor/acceptor" evidence="1">
    <location>
        <position position="71"/>
    </location>
</feature>
<feature type="binding site" evidence="1">
    <location>
        <position position="19"/>
    </location>
    <ligand>
        <name>substrate</name>
    </ligand>
</feature>
<feature type="binding site" evidence="1">
    <location>
        <position position="23"/>
    </location>
    <ligand>
        <name>substrate</name>
    </ligand>
</feature>
<feature type="binding site" evidence="1">
    <location>
        <begin position="45"/>
        <end position="48"/>
    </location>
    <ligand>
        <name>substrate</name>
    </ligand>
</feature>
<feature type="binding site" evidence="1">
    <location>
        <begin position="65"/>
        <end position="66"/>
    </location>
    <ligand>
        <name>substrate</name>
    </ligand>
</feature>
<feature type="binding site" evidence="1">
    <location>
        <position position="98"/>
    </location>
    <ligand>
        <name>substrate</name>
    </ligand>
</feature>
<name>MGSA_YERPB</name>
<accession>B2JYU0</accession>
<dbReference type="EC" id="4.2.3.3" evidence="1"/>
<dbReference type="EMBL" id="CP001048">
    <property type="protein sequence ID" value="ACC88537.1"/>
    <property type="molecule type" value="Genomic_DNA"/>
</dbReference>
<dbReference type="RefSeq" id="WP_002213060.1">
    <property type="nucleotide sequence ID" value="NZ_CP009780.1"/>
</dbReference>
<dbReference type="SMR" id="B2JYU0"/>
<dbReference type="KEGG" id="ypb:YPTS_1565"/>
<dbReference type="PATRIC" id="fig|502801.10.peg.929"/>
<dbReference type="GO" id="GO:0005829">
    <property type="term" value="C:cytosol"/>
    <property type="evidence" value="ECO:0007669"/>
    <property type="project" value="TreeGrafter"/>
</dbReference>
<dbReference type="GO" id="GO:0008929">
    <property type="term" value="F:methylglyoxal synthase activity"/>
    <property type="evidence" value="ECO:0007669"/>
    <property type="project" value="UniProtKB-UniRule"/>
</dbReference>
<dbReference type="GO" id="GO:0019242">
    <property type="term" value="P:methylglyoxal biosynthetic process"/>
    <property type="evidence" value="ECO:0007669"/>
    <property type="project" value="UniProtKB-UniRule"/>
</dbReference>
<dbReference type="CDD" id="cd01422">
    <property type="entry name" value="MGS"/>
    <property type="match status" value="1"/>
</dbReference>
<dbReference type="FunFam" id="3.40.50.1380:FF:000002">
    <property type="entry name" value="Methylglyoxal synthase"/>
    <property type="match status" value="1"/>
</dbReference>
<dbReference type="Gene3D" id="3.40.50.1380">
    <property type="entry name" value="Methylglyoxal synthase-like domain"/>
    <property type="match status" value="1"/>
</dbReference>
<dbReference type="HAMAP" id="MF_00549">
    <property type="entry name" value="Methylglyoxal_synth"/>
    <property type="match status" value="1"/>
</dbReference>
<dbReference type="InterPro" id="IPR004363">
    <property type="entry name" value="Methylgl_synth"/>
</dbReference>
<dbReference type="InterPro" id="IPR018148">
    <property type="entry name" value="Methylglyoxal_synth_AS"/>
</dbReference>
<dbReference type="InterPro" id="IPR011607">
    <property type="entry name" value="MGS-like_dom"/>
</dbReference>
<dbReference type="InterPro" id="IPR036914">
    <property type="entry name" value="MGS-like_dom_sf"/>
</dbReference>
<dbReference type="NCBIfam" id="TIGR00160">
    <property type="entry name" value="MGSA"/>
    <property type="match status" value="1"/>
</dbReference>
<dbReference type="NCBIfam" id="NF003559">
    <property type="entry name" value="PRK05234.1"/>
    <property type="match status" value="1"/>
</dbReference>
<dbReference type="PANTHER" id="PTHR30492">
    <property type="entry name" value="METHYLGLYOXAL SYNTHASE"/>
    <property type="match status" value="1"/>
</dbReference>
<dbReference type="PANTHER" id="PTHR30492:SF0">
    <property type="entry name" value="METHYLGLYOXAL SYNTHASE"/>
    <property type="match status" value="1"/>
</dbReference>
<dbReference type="Pfam" id="PF02142">
    <property type="entry name" value="MGS"/>
    <property type="match status" value="1"/>
</dbReference>
<dbReference type="PIRSF" id="PIRSF006614">
    <property type="entry name" value="Methylglyox_syn"/>
    <property type="match status" value="1"/>
</dbReference>
<dbReference type="SMART" id="SM00851">
    <property type="entry name" value="MGS"/>
    <property type="match status" value="1"/>
</dbReference>
<dbReference type="SUPFAM" id="SSF52335">
    <property type="entry name" value="Methylglyoxal synthase-like"/>
    <property type="match status" value="1"/>
</dbReference>
<dbReference type="PROSITE" id="PS01335">
    <property type="entry name" value="METHYLGLYOXAL_SYNTH"/>
    <property type="match status" value="1"/>
</dbReference>
<dbReference type="PROSITE" id="PS51855">
    <property type="entry name" value="MGS"/>
    <property type="match status" value="1"/>
</dbReference>